<dbReference type="EC" id="2.7.7.59" evidence="1"/>
<dbReference type="EC" id="3.1.4.-" evidence="1"/>
<dbReference type="EMBL" id="CR543861">
    <property type="protein sequence ID" value="CAG68888.1"/>
    <property type="molecule type" value="Genomic_DNA"/>
</dbReference>
<dbReference type="RefSeq" id="WP_004927516.1">
    <property type="nucleotide sequence ID" value="NC_005966.1"/>
</dbReference>
<dbReference type="SMR" id="Q6FAM5"/>
<dbReference type="STRING" id="202950.GCA_001485005_00302"/>
<dbReference type="GeneID" id="45234425"/>
<dbReference type="KEGG" id="aci:ACIAD2079"/>
<dbReference type="eggNOG" id="COG2844">
    <property type="taxonomic scope" value="Bacteria"/>
</dbReference>
<dbReference type="HOGENOM" id="CLU_012833_0_0_6"/>
<dbReference type="OrthoDB" id="9758038at2"/>
<dbReference type="BioCyc" id="ASP62977:ACIAD_RS09535-MONOMER"/>
<dbReference type="Proteomes" id="UP000000430">
    <property type="component" value="Chromosome"/>
</dbReference>
<dbReference type="GO" id="GO:0008773">
    <property type="term" value="F:[protein-PII] uridylyltransferase activity"/>
    <property type="evidence" value="ECO:0007669"/>
    <property type="project" value="UniProtKB-UniRule"/>
</dbReference>
<dbReference type="GO" id="GO:0008081">
    <property type="term" value="F:phosphoric diester hydrolase activity"/>
    <property type="evidence" value="ECO:0007669"/>
    <property type="project" value="UniProtKB-UniRule"/>
</dbReference>
<dbReference type="GO" id="GO:0006808">
    <property type="term" value="P:regulation of nitrogen utilization"/>
    <property type="evidence" value="ECO:0007669"/>
    <property type="project" value="UniProtKB-UniRule"/>
</dbReference>
<dbReference type="CDD" id="cd04899">
    <property type="entry name" value="ACT_ACR-UUR-like_2"/>
    <property type="match status" value="1"/>
</dbReference>
<dbReference type="CDD" id="cd04900">
    <property type="entry name" value="ACT_UUR-like_1"/>
    <property type="match status" value="1"/>
</dbReference>
<dbReference type="CDD" id="cd00077">
    <property type="entry name" value="HDc"/>
    <property type="match status" value="1"/>
</dbReference>
<dbReference type="CDD" id="cd05401">
    <property type="entry name" value="NT_GlnE_GlnD_like"/>
    <property type="match status" value="1"/>
</dbReference>
<dbReference type="Gene3D" id="1.10.3210.10">
    <property type="entry name" value="Hypothetical protein af1432"/>
    <property type="match status" value="1"/>
</dbReference>
<dbReference type="Gene3D" id="1.20.120.330">
    <property type="entry name" value="Nucleotidyltransferases domain 2"/>
    <property type="match status" value="1"/>
</dbReference>
<dbReference type="HAMAP" id="MF_00277">
    <property type="entry name" value="PII_uridylyl_transf"/>
    <property type="match status" value="1"/>
</dbReference>
<dbReference type="InterPro" id="IPR045865">
    <property type="entry name" value="ACT-like_dom_sf"/>
</dbReference>
<dbReference type="InterPro" id="IPR002912">
    <property type="entry name" value="ACT_dom"/>
</dbReference>
<dbReference type="InterPro" id="IPR003607">
    <property type="entry name" value="HD/PDEase_dom"/>
</dbReference>
<dbReference type="InterPro" id="IPR006674">
    <property type="entry name" value="HD_domain"/>
</dbReference>
<dbReference type="InterPro" id="IPR043519">
    <property type="entry name" value="NT_sf"/>
</dbReference>
<dbReference type="InterPro" id="IPR013546">
    <property type="entry name" value="PII_UdlTrfase/GS_AdlTrfase"/>
</dbReference>
<dbReference type="InterPro" id="IPR002934">
    <property type="entry name" value="Polymerase_NTP_transf_dom"/>
</dbReference>
<dbReference type="InterPro" id="IPR010043">
    <property type="entry name" value="UTase/UR"/>
</dbReference>
<dbReference type="NCBIfam" id="TIGR01693">
    <property type="entry name" value="UTase_glnD"/>
    <property type="match status" value="1"/>
</dbReference>
<dbReference type="PANTHER" id="PTHR47320">
    <property type="entry name" value="BIFUNCTIONAL URIDYLYLTRANSFERASE/URIDYLYL-REMOVING ENZYME"/>
    <property type="match status" value="1"/>
</dbReference>
<dbReference type="PANTHER" id="PTHR47320:SF1">
    <property type="entry name" value="BIFUNCTIONAL URIDYLYLTRANSFERASE_URIDYLYL-REMOVING ENZYME"/>
    <property type="match status" value="1"/>
</dbReference>
<dbReference type="Pfam" id="PF08335">
    <property type="entry name" value="GlnD_UR_UTase"/>
    <property type="match status" value="1"/>
</dbReference>
<dbReference type="Pfam" id="PF01966">
    <property type="entry name" value="HD"/>
    <property type="match status" value="1"/>
</dbReference>
<dbReference type="Pfam" id="PF01909">
    <property type="entry name" value="NTP_transf_2"/>
    <property type="match status" value="1"/>
</dbReference>
<dbReference type="PIRSF" id="PIRSF006288">
    <property type="entry name" value="PII_uridyltransf"/>
    <property type="match status" value="1"/>
</dbReference>
<dbReference type="SMART" id="SM00471">
    <property type="entry name" value="HDc"/>
    <property type="match status" value="1"/>
</dbReference>
<dbReference type="SUPFAM" id="SSF55021">
    <property type="entry name" value="ACT-like"/>
    <property type="match status" value="1"/>
</dbReference>
<dbReference type="SUPFAM" id="SSF109604">
    <property type="entry name" value="HD-domain/PDEase-like"/>
    <property type="match status" value="1"/>
</dbReference>
<dbReference type="SUPFAM" id="SSF81301">
    <property type="entry name" value="Nucleotidyltransferase"/>
    <property type="match status" value="1"/>
</dbReference>
<dbReference type="SUPFAM" id="SSF81593">
    <property type="entry name" value="Nucleotidyltransferase substrate binding subunit/domain"/>
    <property type="match status" value="1"/>
</dbReference>
<dbReference type="PROSITE" id="PS51671">
    <property type="entry name" value="ACT"/>
    <property type="match status" value="2"/>
</dbReference>
<dbReference type="PROSITE" id="PS51831">
    <property type="entry name" value="HD"/>
    <property type="match status" value="1"/>
</dbReference>
<reference key="1">
    <citation type="journal article" date="2004" name="Nucleic Acids Res.">
        <title>Unique features revealed by the genome sequence of Acinetobacter sp. ADP1, a versatile and naturally transformation competent bacterium.</title>
        <authorList>
            <person name="Barbe V."/>
            <person name="Vallenet D."/>
            <person name="Fonknechten N."/>
            <person name="Kreimeyer A."/>
            <person name="Oztas S."/>
            <person name="Labarre L."/>
            <person name="Cruveiller S."/>
            <person name="Robert C."/>
            <person name="Duprat S."/>
            <person name="Wincker P."/>
            <person name="Ornston L.N."/>
            <person name="Weissenbach J."/>
            <person name="Marliere P."/>
            <person name="Cohen G.N."/>
            <person name="Medigue C."/>
        </authorList>
    </citation>
    <scope>NUCLEOTIDE SEQUENCE [LARGE SCALE GENOMIC DNA]</scope>
    <source>
        <strain>ATCC 33305 / BD413 / ADP1</strain>
    </source>
</reference>
<comment type="function">
    <text evidence="1">Modifies, by uridylylation and deuridylylation, the PII regulatory proteins (GlnB and homologs), in response to the nitrogen status of the cell that GlnD senses through the glutamine level. Under low glutamine levels, catalyzes the conversion of the PII proteins and UTP to PII-UMP and PPi, while under higher glutamine levels, GlnD hydrolyzes PII-UMP to PII and UMP (deuridylylation). Thus, controls uridylylation state and activity of the PII proteins, and plays an important role in the regulation of nitrogen assimilation and metabolism.</text>
</comment>
<comment type="catalytic activity">
    <reaction evidence="1">
        <text>[protein-PII]-L-tyrosine + UTP = [protein-PII]-uridylyl-L-tyrosine + diphosphate</text>
        <dbReference type="Rhea" id="RHEA:13673"/>
        <dbReference type="Rhea" id="RHEA-COMP:12147"/>
        <dbReference type="Rhea" id="RHEA-COMP:12148"/>
        <dbReference type="ChEBI" id="CHEBI:33019"/>
        <dbReference type="ChEBI" id="CHEBI:46398"/>
        <dbReference type="ChEBI" id="CHEBI:46858"/>
        <dbReference type="ChEBI" id="CHEBI:90602"/>
        <dbReference type="EC" id="2.7.7.59"/>
    </reaction>
</comment>
<comment type="catalytic activity">
    <reaction evidence="1">
        <text>[protein-PII]-uridylyl-L-tyrosine + H2O = [protein-PII]-L-tyrosine + UMP + H(+)</text>
        <dbReference type="Rhea" id="RHEA:48600"/>
        <dbReference type="Rhea" id="RHEA-COMP:12147"/>
        <dbReference type="Rhea" id="RHEA-COMP:12148"/>
        <dbReference type="ChEBI" id="CHEBI:15377"/>
        <dbReference type="ChEBI" id="CHEBI:15378"/>
        <dbReference type="ChEBI" id="CHEBI:46858"/>
        <dbReference type="ChEBI" id="CHEBI:57865"/>
        <dbReference type="ChEBI" id="CHEBI:90602"/>
    </reaction>
</comment>
<comment type="cofactor">
    <cofactor evidence="1">
        <name>Mg(2+)</name>
        <dbReference type="ChEBI" id="CHEBI:18420"/>
    </cofactor>
</comment>
<comment type="activity regulation">
    <text evidence="1">Uridylyltransferase (UTase) activity is inhibited by glutamine, while glutamine activates uridylyl-removing (UR) activity.</text>
</comment>
<comment type="domain">
    <text evidence="1">Has four distinct domains: an N-terminal nucleotidyltransferase (NT) domain responsible for UTase activity, a central HD domain that encodes UR activity, and two C-terminal ACT domains that seem to have a role in glutamine sensing.</text>
</comment>
<comment type="similarity">
    <text evidence="1">Belongs to the GlnD family.</text>
</comment>
<gene>
    <name evidence="1" type="primary">glnD</name>
    <name type="ordered locus">ACIAD2079</name>
</gene>
<accession>Q6FAM5</accession>
<name>GLND_ACIAD</name>
<sequence>MIITSPLLDYVTSHQDIKAINQWRADVEQQLQEFYENGYSIRDIVLARSNLIDEALTFLWKHAGLDQSDLGLFAVGGYGRREMLPYSDVDIMILSENDISPEHEKQISGFISSLWDVGNFKPGTSVRSIQNCVEQATNDLTVATTLIESRLITGNPDLAKWPRRIVSQTWTDKTFFDAKMEEQAKRHAQHNNTESNLEPDIKNAPGGIRDMNQIGWIAKRHFRVNRIYDLVHLGFITEYELKVLEEAESFLWEIRHHLHLLSKRDENRLLFDHQREIAAKFGYTRAEGQPVNFAVEQFMKRYYRTAQQVSTLNEMLLAYFNESVITPRLPNYERKIEEINENFKLVDGKLAVQHHKVFSENPSAILELFYLLANHPEIEGIRARTLRLLIMAAKRIDQEFRDNPAHQALFMAIIRSPYRLYDTLVDMKRYGILGNYIPAFGQIMGLMQYDLFHIYTVDAHTLLLIRNLNRFKEPEFAQHFPVVSSVFQRLARRDIVYLAAIFHDIAKGRGGDHSELGAEDAIEFCRAHGFTERECKLVAWLIHNHLLMSLTAQKKDISDPDVIKEFAEKLGDMEHLDYLYTLTVADINATNPKLWNTWRASLMRQLYTYSRDVIRSGLGRPVDYQMLIEDTKFSASETLVNEFSLDAVEKVWQELGDEYFLKESADEIAWHTRAILQHGDNPAPIVLLRAHRQSAQDAVQIFIYTQDKPNLFATTVAVLDRMNLDVQDARIITATKAFSLDTYVVLDRFGTLLTDPEREHTVKEALIKALSQSDKYPGLMQRRIPRQLRHFDIENTVDITLNPVLQQNMVEISTLDQPGLLARVGGLFMMQGLDIHSAKIATLGERAEDIFFVTKKDGQPMTTDEAHIFSAQLKLALDEASNQIVSQH</sequence>
<proteinExistence type="inferred from homology"/>
<evidence type="ECO:0000255" key="1">
    <source>
        <dbReference type="HAMAP-Rule" id="MF_00277"/>
    </source>
</evidence>
<evidence type="ECO:0000255" key="2">
    <source>
        <dbReference type="PROSITE-ProRule" id="PRU01175"/>
    </source>
</evidence>
<evidence type="ECO:0000256" key="3">
    <source>
        <dbReference type="SAM" id="MobiDB-lite"/>
    </source>
</evidence>
<feature type="chain" id="PRO_0000192713" description="Bifunctional uridylyltransferase/uridylyl-removing enzyme">
    <location>
        <begin position="1"/>
        <end position="888"/>
    </location>
</feature>
<feature type="domain" description="HD" evidence="2">
    <location>
        <begin position="457"/>
        <end position="579"/>
    </location>
</feature>
<feature type="domain" description="ACT 1" evidence="1">
    <location>
        <begin position="700"/>
        <end position="781"/>
    </location>
</feature>
<feature type="domain" description="ACT 2" evidence="1">
    <location>
        <begin position="809"/>
        <end position="887"/>
    </location>
</feature>
<feature type="region of interest" description="Uridylyltransferase">
    <location>
        <begin position="1"/>
        <end position="338"/>
    </location>
</feature>
<feature type="region of interest" description="Disordered" evidence="3">
    <location>
        <begin position="182"/>
        <end position="204"/>
    </location>
</feature>
<feature type="region of interest" description="Uridylyl-removing">
    <location>
        <begin position="339"/>
        <end position="699"/>
    </location>
</feature>
<organism>
    <name type="scientific">Acinetobacter baylyi (strain ATCC 33305 / BD413 / ADP1)</name>
    <dbReference type="NCBI Taxonomy" id="62977"/>
    <lineage>
        <taxon>Bacteria</taxon>
        <taxon>Pseudomonadati</taxon>
        <taxon>Pseudomonadota</taxon>
        <taxon>Gammaproteobacteria</taxon>
        <taxon>Moraxellales</taxon>
        <taxon>Moraxellaceae</taxon>
        <taxon>Acinetobacter</taxon>
    </lineage>
</organism>
<keyword id="KW-0378">Hydrolase</keyword>
<keyword id="KW-0460">Magnesium</keyword>
<keyword id="KW-0511">Multifunctional enzyme</keyword>
<keyword id="KW-0548">Nucleotidyltransferase</keyword>
<keyword id="KW-0677">Repeat</keyword>
<keyword id="KW-0808">Transferase</keyword>
<protein>
    <recommendedName>
        <fullName evidence="1">Bifunctional uridylyltransferase/uridylyl-removing enzyme</fullName>
        <shortName evidence="1">UTase/UR</shortName>
    </recommendedName>
    <alternativeName>
        <fullName evidence="1">Bifunctional [protein-PII] modification enzyme</fullName>
    </alternativeName>
    <alternativeName>
        <fullName evidence="1">Bifunctional nitrogen sensor protein</fullName>
    </alternativeName>
    <domain>
        <recommendedName>
            <fullName evidence="1">[Protein-PII] uridylyltransferase</fullName>
            <shortName evidence="1">PII uridylyltransferase</shortName>
            <shortName evidence="1">UTase</shortName>
            <ecNumber evidence="1">2.7.7.59</ecNumber>
        </recommendedName>
    </domain>
    <domain>
        <recommendedName>
            <fullName evidence="1">[Protein-PII]-UMP uridylyl-removing enzyme</fullName>
            <shortName evidence="1">UR</shortName>
            <ecNumber evidence="1">3.1.4.-</ecNumber>
        </recommendedName>
    </domain>
</protein>